<comment type="function">
    <text evidence="1">Involved in the binding and/or turnover of quinones at the Q(B) site of photosystem II (PSII). PSII is a light-driven water plastoquinone oxidoreductase, using light energy to abstract electrons from H(2)O, generating a proton gradient subsequently used for ATP formation.</text>
</comment>
<comment type="subunit">
    <text evidence="2">PSII is composed of 1 copy each of membrane proteins PsbA, PsbB, PsbC, PsbD, PsbE, PsbF, PsbH, PsbI, PsbJ, PsbK, PsbL, PsbM, PsbT, PsbX, PsbY, Psb30/Ycf12, peripheral proteins PsbO, CyanoQ (PsbQ), PsbU, PsbV and a large number of cofactors. It forms dimeric complexes.</text>
</comment>
<comment type="subcellular location">
    <subcellularLocation>
        <location evidence="1">Cellular thylakoid membrane</location>
        <topology evidence="1">Single-pass membrane protein</topology>
    </subcellularLocation>
</comment>
<comment type="similarity">
    <text evidence="1">Belongs to the PsbX family. Type 1 subfamily.</text>
</comment>
<feature type="chain" id="PRO_5000096827" description="Photosystem II reaction center protein X">
    <location>
        <begin position="1"/>
        <end position="39"/>
    </location>
</feature>
<feature type="transmembrane region" description="Helical" evidence="1">
    <location>
        <begin position="10"/>
        <end position="30"/>
    </location>
</feature>
<organism>
    <name type="scientific">Prochlorococcus marinus (strain MIT 9313)</name>
    <dbReference type="NCBI Taxonomy" id="74547"/>
    <lineage>
        <taxon>Bacteria</taxon>
        <taxon>Bacillati</taxon>
        <taxon>Cyanobacteriota</taxon>
        <taxon>Cyanophyceae</taxon>
        <taxon>Synechococcales</taxon>
        <taxon>Prochlorococcaceae</taxon>
        <taxon>Prochlorococcus</taxon>
    </lineage>
</organism>
<dbReference type="EMBL" id="BX548175">
    <property type="protein sequence ID" value="CAE21765.1"/>
    <property type="molecule type" value="Genomic_DNA"/>
</dbReference>
<dbReference type="RefSeq" id="WP_011130957.1">
    <property type="nucleotide sequence ID" value="NC_005071.1"/>
</dbReference>
<dbReference type="SMR" id="Q7V5H0"/>
<dbReference type="KEGG" id="pmt:PMT_1590"/>
<dbReference type="eggNOG" id="ENOG50322ZI">
    <property type="taxonomic scope" value="Bacteria"/>
</dbReference>
<dbReference type="HOGENOM" id="CLU_212837_1_0_3"/>
<dbReference type="Proteomes" id="UP000001423">
    <property type="component" value="Chromosome"/>
</dbReference>
<dbReference type="GO" id="GO:0009523">
    <property type="term" value="C:photosystem II"/>
    <property type="evidence" value="ECO:0007669"/>
    <property type="project" value="UniProtKB-KW"/>
</dbReference>
<dbReference type="GO" id="GO:0031676">
    <property type="term" value="C:plasma membrane-derived thylakoid membrane"/>
    <property type="evidence" value="ECO:0007669"/>
    <property type="project" value="UniProtKB-SubCell"/>
</dbReference>
<dbReference type="GO" id="GO:0015979">
    <property type="term" value="P:photosynthesis"/>
    <property type="evidence" value="ECO:0007669"/>
    <property type="project" value="UniProtKB-UniRule"/>
</dbReference>
<dbReference type="Gene3D" id="1.20.5.510">
    <property type="entry name" value="Single helix bin"/>
    <property type="match status" value="1"/>
</dbReference>
<dbReference type="HAMAP" id="MF_01386">
    <property type="entry name" value="PSII_PsbX_1"/>
    <property type="match status" value="1"/>
</dbReference>
<dbReference type="InterPro" id="IPR009518">
    <property type="entry name" value="PSII_PsbX"/>
</dbReference>
<dbReference type="InterPro" id="IPR023431">
    <property type="entry name" value="PSII_PsbX_type_1_subfam"/>
</dbReference>
<dbReference type="Pfam" id="PF06596">
    <property type="entry name" value="PsbX"/>
    <property type="match status" value="1"/>
</dbReference>
<keyword id="KW-0472">Membrane</keyword>
<keyword id="KW-0602">Photosynthesis</keyword>
<keyword id="KW-0604">Photosystem II</keyword>
<keyword id="KW-1185">Reference proteome</keyword>
<keyword id="KW-0793">Thylakoid</keyword>
<keyword id="KW-0812">Transmembrane</keyword>
<keyword id="KW-1133">Transmembrane helix</keyword>
<sequence>MTASLANYLSSLVWAAVIVVIPAAVALVLISQNDQMYRK</sequence>
<reference key="1">
    <citation type="journal article" date="2003" name="Nature">
        <title>Genome divergence in two Prochlorococcus ecotypes reflects oceanic niche differentiation.</title>
        <authorList>
            <person name="Rocap G."/>
            <person name="Larimer F.W."/>
            <person name="Lamerdin J.E."/>
            <person name="Malfatti S."/>
            <person name="Chain P."/>
            <person name="Ahlgren N.A."/>
            <person name="Arellano A."/>
            <person name="Coleman M."/>
            <person name="Hauser L."/>
            <person name="Hess W.R."/>
            <person name="Johnson Z.I."/>
            <person name="Land M.L."/>
            <person name="Lindell D."/>
            <person name="Post A.F."/>
            <person name="Regala W."/>
            <person name="Shah M."/>
            <person name="Shaw S.L."/>
            <person name="Steglich C."/>
            <person name="Sullivan M.B."/>
            <person name="Ting C.S."/>
            <person name="Tolonen A."/>
            <person name="Webb E.A."/>
            <person name="Zinser E.R."/>
            <person name="Chisholm S.W."/>
        </authorList>
    </citation>
    <scope>NUCLEOTIDE SEQUENCE [LARGE SCALE GENOMIC DNA]</scope>
    <source>
        <strain>MIT 9313</strain>
    </source>
</reference>
<accession>Q7V5H0</accession>
<proteinExistence type="inferred from homology"/>
<protein>
    <recommendedName>
        <fullName evidence="1">Photosystem II reaction center protein X</fullName>
    </recommendedName>
</protein>
<name>PSBX_PROMM</name>
<gene>
    <name evidence="1" type="primary">psbX</name>
    <name type="ordered locus">PMT_1590</name>
</gene>
<evidence type="ECO:0000255" key="1">
    <source>
        <dbReference type="HAMAP-Rule" id="MF_01386"/>
    </source>
</evidence>
<evidence type="ECO:0000305" key="2"/>